<protein>
    <recommendedName>
        <fullName evidence="1">Fatty acid oxidation complex subunit alpha</fullName>
    </recommendedName>
    <domain>
        <recommendedName>
            <fullName evidence="1">Enoyl-CoA hydratase/3-hydroxybutyryl-CoA epimerase</fullName>
            <ecNumber evidence="1">4.2.1.17</ecNumber>
            <ecNumber evidence="1">5.1.2.3</ecNumber>
        </recommendedName>
    </domain>
    <domain>
        <recommendedName>
            <fullName evidence="1">3-hydroxyacyl-CoA dehydrogenase</fullName>
            <ecNumber evidence="1">1.1.1.35</ecNumber>
        </recommendedName>
    </domain>
</protein>
<evidence type="ECO:0000255" key="1">
    <source>
        <dbReference type="HAMAP-Rule" id="MF_01617"/>
    </source>
</evidence>
<name>FADJ_SHEB5</name>
<organism>
    <name type="scientific">Shewanella baltica (strain OS155 / ATCC BAA-1091)</name>
    <dbReference type="NCBI Taxonomy" id="325240"/>
    <lineage>
        <taxon>Bacteria</taxon>
        <taxon>Pseudomonadati</taxon>
        <taxon>Pseudomonadota</taxon>
        <taxon>Gammaproteobacteria</taxon>
        <taxon>Alteromonadales</taxon>
        <taxon>Shewanellaceae</taxon>
        <taxon>Shewanella</taxon>
    </lineage>
</organism>
<accession>A3D684</accession>
<comment type="function">
    <text evidence="1">Catalyzes the formation of a hydroxyacyl-CoA by addition of water on enoyl-CoA. Also exhibits 3-hydroxyacyl-CoA epimerase and 3-hydroxyacyl-CoA dehydrogenase activities.</text>
</comment>
<comment type="catalytic activity">
    <reaction evidence="1">
        <text>a (3S)-3-hydroxyacyl-CoA = a (2E)-enoyl-CoA + H2O</text>
        <dbReference type="Rhea" id="RHEA:16105"/>
        <dbReference type="ChEBI" id="CHEBI:15377"/>
        <dbReference type="ChEBI" id="CHEBI:57318"/>
        <dbReference type="ChEBI" id="CHEBI:58856"/>
        <dbReference type="EC" id="4.2.1.17"/>
    </reaction>
</comment>
<comment type="catalytic activity">
    <reaction evidence="1">
        <text>a 4-saturated-(3S)-3-hydroxyacyl-CoA = a (3E)-enoyl-CoA + H2O</text>
        <dbReference type="Rhea" id="RHEA:20724"/>
        <dbReference type="ChEBI" id="CHEBI:15377"/>
        <dbReference type="ChEBI" id="CHEBI:58521"/>
        <dbReference type="ChEBI" id="CHEBI:137480"/>
        <dbReference type="EC" id="4.2.1.17"/>
    </reaction>
</comment>
<comment type="catalytic activity">
    <reaction evidence="1">
        <text>a (3S)-3-hydroxyacyl-CoA + NAD(+) = a 3-oxoacyl-CoA + NADH + H(+)</text>
        <dbReference type="Rhea" id="RHEA:22432"/>
        <dbReference type="ChEBI" id="CHEBI:15378"/>
        <dbReference type="ChEBI" id="CHEBI:57318"/>
        <dbReference type="ChEBI" id="CHEBI:57540"/>
        <dbReference type="ChEBI" id="CHEBI:57945"/>
        <dbReference type="ChEBI" id="CHEBI:90726"/>
        <dbReference type="EC" id="1.1.1.35"/>
    </reaction>
</comment>
<comment type="catalytic activity">
    <reaction evidence="1">
        <text>(3S)-3-hydroxybutanoyl-CoA = (3R)-3-hydroxybutanoyl-CoA</text>
        <dbReference type="Rhea" id="RHEA:21760"/>
        <dbReference type="ChEBI" id="CHEBI:57315"/>
        <dbReference type="ChEBI" id="CHEBI:57316"/>
        <dbReference type="EC" id="5.1.2.3"/>
    </reaction>
</comment>
<comment type="pathway">
    <text evidence="1">Lipid metabolism; fatty acid beta-oxidation.</text>
</comment>
<comment type="subunit">
    <text evidence="1">Heterotetramer of two alpha chains (FadJ) and two beta chains (FadI).</text>
</comment>
<comment type="subcellular location">
    <subcellularLocation>
        <location evidence="1">Cytoplasm</location>
    </subcellularLocation>
</comment>
<comment type="similarity">
    <text evidence="1">In the N-terminal section; belongs to the enoyl-CoA hydratase/isomerase family.</text>
</comment>
<comment type="similarity">
    <text evidence="1">In the central section; belongs to the 3-hydroxyacyl-CoA dehydrogenase family.</text>
</comment>
<sequence length="706" mass="75726">MEKTFNLTRRDDGIAILTMDVPGETMNTLKAQFGPEISEILADIKSDSSIRGLVLISGKKDSFVAGADISMLDACKTAGDAKALSQQGHVVFNELEALTIPVVAAIHGACLGGGLELALACHQRVCSDDGKTMLGVPEVQLGLLPGGGGTQRLPRLVGITTALDMMLTGKQIRPKQALKMGLVNDVVPQTILLQTAVEMALAGKRAPKPVKKSLVNQVLEGTSFGRNIIFDQATKQVEKKTQGNYPAPAKIIDCVRQGITKGMQKGLEVEASHFAELVVSKESEALRSIFFATTEMKKETGAEGASPRKVKKAVILGGGLMGGGIASVTTTKAKIPVRVKDISEKGLSNALAYAYKLLDKGVKRRHMTPAARDNLMALMTTTTEYKGVKDADIVVEAVFEDLALKHQMVKDIERECGEHTIFASNTSSLPISQIAEAATRPENVIGLHYFSPVEKMPLVEVIAHAKTSPETIATTVAFARKQGKTPIVVQDGAGFYVNRILALYMNEAAQLLLEGQSVEHLDKALVKFGFPVGPITLLDEVGIDVGAKISPILEKELGERFKAPAAFDKLLGDDRKGRKNGKGFYQYGASSKKAKAVDESVYGVLGIKPGTNKDAKALAERCVVQMLNEAVRCLDDGIIASPRDGDIGAIFGIGFPPFLGGPFHYIDTLGAANLVRILEGYQSQLGSRFEPCERLKTMAQENAHFF</sequence>
<proteinExistence type="inferred from homology"/>
<gene>
    <name evidence="1" type="primary">fadJ</name>
    <name type="ordered locus">Sbal_2760</name>
</gene>
<feature type="chain" id="PRO_0000323526" description="Fatty acid oxidation complex subunit alpha">
    <location>
        <begin position="1"/>
        <end position="706"/>
    </location>
</feature>
<feature type="region of interest" description="Enoyl-CoA hydratase" evidence="1">
    <location>
        <begin position="1"/>
        <end position="188"/>
    </location>
</feature>
<feature type="region of interest" description="3-hydroxyacyl-CoA dehydrogenase" evidence="1">
    <location>
        <begin position="308"/>
        <end position="706"/>
    </location>
</feature>
<feature type="site" description="Important for catalytic activity" evidence="1">
    <location>
        <position position="116"/>
    </location>
</feature>
<feature type="site" description="Important for catalytic activity" evidence="1">
    <location>
        <position position="138"/>
    </location>
</feature>
<keyword id="KW-0963">Cytoplasm</keyword>
<keyword id="KW-0276">Fatty acid metabolism</keyword>
<keyword id="KW-0413">Isomerase</keyword>
<keyword id="KW-0442">Lipid degradation</keyword>
<keyword id="KW-0443">Lipid metabolism</keyword>
<keyword id="KW-0456">Lyase</keyword>
<keyword id="KW-0511">Multifunctional enzyme</keyword>
<keyword id="KW-0520">NAD</keyword>
<keyword id="KW-0560">Oxidoreductase</keyword>
<keyword id="KW-1185">Reference proteome</keyword>
<dbReference type="EC" id="4.2.1.17" evidence="1"/>
<dbReference type="EC" id="5.1.2.3" evidence="1"/>
<dbReference type="EC" id="1.1.1.35" evidence="1"/>
<dbReference type="EMBL" id="CP000563">
    <property type="protein sequence ID" value="ABN62247.1"/>
    <property type="molecule type" value="Genomic_DNA"/>
</dbReference>
<dbReference type="RefSeq" id="WP_011847190.1">
    <property type="nucleotide sequence ID" value="NC_009052.1"/>
</dbReference>
<dbReference type="SMR" id="A3D684"/>
<dbReference type="STRING" id="325240.Sbal_2760"/>
<dbReference type="KEGG" id="sbl:Sbal_2760"/>
<dbReference type="HOGENOM" id="CLU_009834_16_1_6"/>
<dbReference type="OrthoDB" id="5389341at2"/>
<dbReference type="UniPathway" id="UPA00659"/>
<dbReference type="Proteomes" id="UP000001557">
    <property type="component" value="Chromosome"/>
</dbReference>
<dbReference type="GO" id="GO:0005737">
    <property type="term" value="C:cytoplasm"/>
    <property type="evidence" value="ECO:0007669"/>
    <property type="project" value="UniProtKB-SubCell"/>
</dbReference>
<dbReference type="GO" id="GO:0008692">
    <property type="term" value="F:3-hydroxybutyryl-CoA epimerase activity"/>
    <property type="evidence" value="ECO:0007669"/>
    <property type="project" value="UniProtKB-UniRule"/>
</dbReference>
<dbReference type="GO" id="GO:0004300">
    <property type="term" value="F:enoyl-CoA hydratase activity"/>
    <property type="evidence" value="ECO:0007669"/>
    <property type="project" value="UniProtKB-UniRule"/>
</dbReference>
<dbReference type="GO" id="GO:0016509">
    <property type="term" value="F:long-chain-3-hydroxyacyl-CoA dehydrogenase activity"/>
    <property type="evidence" value="ECO:0007669"/>
    <property type="project" value="TreeGrafter"/>
</dbReference>
<dbReference type="GO" id="GO:0070403">
    <property type="term" value="F:NAD+ binding"/>
    <property type="evidence" value="ECO:0007669"/>
    <property type="project" value="InterPro"/>
</dbReference>
<dbReference type="GO" id="GO:0006635">
    <property type="term" value="P:fatty acid beta-oxidation"/>
    <property type="evidence" value="ECO:0007669"/>
    <property type="project" value="UniProtKB-UniRule"/>
</dbReference>
<dbReference type="CDD" id="cd06558">
    <property type="entry name" value="crotonase-like"/>
    <property type="match status" value="1"/>
</dbReference>
<dbReference type="FunFam" id="1.10.1040.50:FF:000003">
    <property type="entry name" value="Fatty acid oxidation complex subunit alpha"/>
    <property type="match status" value="1"/>
</dbReference>
<dbReference type="FunFam" id="3.90.226.10:FF:000011">
    <property type="entry name" value="Fatty acid oxidation complex subunit alpha"/>
    <property type="match status" value="1"/>
</dbReference>
<dbReference type="FunFam" id="3.40.50.720:FF:000009">
    <property type="entry name" value="Fatty oxidation complex, alpha subunit"/>
    <property type="match status" value="1"/>
</dbReference>
<dbReference type="Gene3D" id="1.10.1040.50">
    <property type="match status" value="1"/>
</dbReference>
<dbReference type="Gene3D" id="3.90.226.10">
    <property type="entry name" value="2-enoyl-CoA Hydratase, Chain A, domain 1"/>
    <property type="match status" value="1"/>
</dbReference>
<dbReference type="Gene3D" id="3.40.50.720">
    <property type="entry name" value="NAD(P)-binding Rossmann-like Domain"/>
    <property type="match status" value="1"/>
</dbReference>
<dbReference type="HAMAP" id="MF_01617">
    <property type="entry name" value="FadJ"/>
    <property type="match status" value="1"/>
</dbReference>
<dbReference type="InterPro" id="IPR006176">
    <property type="entry name" value="3-OHacyl-CoA_DH_NAD-bd"/>
</dbReference>
<dbReference type="InterPro" id="IPR006108">
    <property type="entry name" value="3HC_DH_C"/>
</dbReference>
<dbReference type="InterPro" id="IPR008927">
    <property type="entry name" value="6-PGluconate_DH-like_C_sf"/>
</dbReference>
<dbReference type="InterPro" id="IPR029045">
    <property type="entry name" value="ClpP/crotonase-like_dom_sf"/>
</dbReference>
<dbReference type="InterPro" id="IPR001753">
    <property type="entry name" value="Enoyl-CoA_hydra/iso"/>
</dbReference>
<dbReference type="InterPro" id="IPR050136">
    <property type="entry name" value="FA_oxidation_alpha_subunit"/>
</dbReference>
<dbReference type="InterPro" id="IPR012802">
    <property type="entry name" value="FadJ"/>
</dbReference>
<dbReference type="InterPro" id="IPR036291">
    <property type="entry name" value="NAD(P)-bd_dom_sf"/>
</dbReference>
<dbReference type="NCBIfam" id="TIGR02440">
    <property type="entry name" value="FadJ"/>
    <property type="match status" value="1"/>
</dbReference>
<dbReference type="NCBIfam" id="NF008363">
    <property type="entry name" value="PRK11154.1"/>
    <property type="match status" value="1"/>
</dbReference>
<dbReference type="PANTHER" id="PTHR43612">
    <property type="entry name" value="TRIFUNCTIONAL ENZYME SUBUNIT ALPHA"/>
    <property type="match status" value="1"/>
</dbReference>
<dbReference type="PANTHER" id="PTHR43612:SF3">
    <property type="entry name" value="TRIFUNCTIONAL ENZYME SUBUNIT ALPHA, MITOCHONDRIAL"/>
    <property type="match status" value="1"/>
</dbReference>
<dbReference type="Pfam" id="PF00725">
    <property type="entry name" value="3HCDH"/>
    <property type="match status" value="2"/>
</dbReference>
<dbReference type="Pfam" id="PF02737">
    <property type="entry name" value="3HCDH_N"/>
    <property type="match status" value="1"/>
</dbReference>
<dbReference type="Pfam" id="PF00378">
    <property type="entry name" value="ECH_1"/>
    <property type="match status" value="1"/>
</dbReference>
<dbReference type="SUPFAM" id="SSF48179">
    <property type="entry name" value="6-phosphogluconate dehydrogenase C-terminal domain-like"/>
    <property type="match status" value="2"/>
</dbReference>
<dbReference type="SUPFAM" id="SSF52096">
    <property type="entry name" value="ClpP/crotonase"/>
    <property type="match status" value="1"/>
</dbReference>
<dbReference type="SUPFAM" id="SSF51735">
    <property type="entry name" value="NAD(P)-binding Rossmann-fold domains"/>
    <property type="match status" value="1"/>
</dbReference>
<reference key="1">
    <citation type="submission" date="2007-02" db="EMBL/GenBank/DDBJ databases">
        <title>Complete sequence of chromosome of Shewanella baltica OS155.</title>
        <authorList>
            <consortium name="US DOE Joint Genome Institute"/>
            <person name="Copeland A."/>
            <person name="Lucas S."/>
            <person name="Lapidus A."/>
            <person name="Barry K."/>
            <person name="Detter J.C."/>
            <person name="Glavina del Rio T."/>
            <person name="Hammon N."/>
            <person name="Israni S."/>
            <person name="Dalin E."/>
            <person name="Tice H."/>
            <person name="Pitluck S."/>
            <person name="Sims D.R."/>
            <person name="Brettin T."/>
            <person name="Bruce D."/>
            <person name="Han C."/>
            <person name="Tapia R."/>
            <person name="Brainard J."/>
            <person name="Schmutz J."/>
            <person name="Larimer F."/>
            <person name="Land M."/>
            <person name="Hauser L."/>
            <person name="Kyrpides N."/>
            <person name="Mikhailova N."/>
            <person name="Brettar I."/>
            <person name="Klappenbach J."/>
            <person name="Konstantinidis K."/>
            <person name="Rodrigues J."/>
            <person name="Tiedje J."/>
            <person name="Richardson P."/>
        </authorList>
    </citation>
    <scope>NUCLEOTIDE SEQUENCE [LARGE SCALE GENOMIC DNA]</scope>
    <source>
        <strain>OS155 / ATCC BAA-1091</strain>
    </source>
</reference>